<evidence type="ECO:0000250" key="1"/>
<evidence type="ECO:0000255" key="2">
    <source>
        <dbReference type="PROSITE-ProRule" id="PRU00704"/>
    </source>
</evidence>
<evidence type="ECO:0000269" key="3">
    <source>
    </source>
</evidence>
<evidence type="ECO:0000269" key="4">
    <source>
    </source>
</evidence>
<evidence type="ECO:0000269" key="5">
    <source>
    </source>
</evidence>
<evidence type="ECO:0000269" key="6">
    <source>
    </source>
</evidence>
<evidence type="ECO:0000305" key="7"/>
<evidence type="ECO:0000305" key="8">
    <source>
    </source>
</evidence>
<evidence type="ECO:0007829" key="9">
    <source>
        <dbReference type="PDB" id="3RIO"/>
    </source>
</evidence>
<evidence type="ECO:0007829" key="10">
    <source>
        <dbReference type="PDB" id="3UFE"/>
    </source>
</evidence>
<name>GLCT_BACSU</name>
<sequence>MNGSFTVKKVLNNNVLIASHHKYSEVVLIGKGIGFGKKQDDVIEDKGYDKMFILKDEKEQKQFKKLLDYVDEKLVDISNDVIYHISNRTNHSLNEHIHIALTDHIAFAIKRQQQGFDMKNPFLMETQSLYPEEYQIAKEVIDMINEKAGLCLPEGEIGFIALHIHSALTNRPLSEVNQHSQLMAQLVEVIEDSFQMKVNKESVNYLRLIRHIRFTIERIKKEEPTKEPEKLMLLLKNEYPLCYNTAWKLIKILQQTLKKPVHEAEAVYLTLHLYRLTNKIS</sequence>
<comment type="function">
    <text evidence="4 6">Mediates the positive regulation of the glucose PTS operon (ptsGHI) by functioning as an antiterminator factor of transcription via its interaction with the RNA-antiterminator (RAT) sequence located upstream of the ptsG gene. The RNA-binding domain of GlcT directly binds to the RNA antiterminator (RAT) sequence and prevents transcriptional termination. GlcT binding requires two identical and nearly symmetrical triple base pairings in the RAT sequence.</text>
</comment>
<comment type="subunit">
    <text evidence="1">Homodimer (By similarity). The monomeric form probably also exists but it would be inactive in RNA binding and antitermination.</text>
</comment>
<comment type="domain">
    <text>Composed of 3 domains: an N-terminal RNA-binding domain that prevents transcriptional termination, and two PTS regulation domains, PRD 1 and PRD 2. PRD 1 is the target of negative control exerted by EII-Glc and PRD 2 is the target of HPr.</text>
</comment>
<comment type="PTM">
    <text evidence="5 6">Phosphorylated by HPr (PtsH) and EII-Glc (PtsG). HPr phosphorylates the PRD 2 domain which has a slight stimulatory effect on GlcT activity, while EII-Glc phosphorylates the PRD 1 domain which inactivates GlcT. The phosphorylation is dependent on the presence or absence of glucose which acts as an inducer of the ptsGHI operon expression. In the presence of glucose the phosphoryl group is transferred from phosphorylated HPr to the sugar via EII-Glc. Under these conditions GlcT is not phosphorylated and binds to the RAT sequence, thus allowing transcription of the ptsGHI operon. In the absence of glucose, phosphorylated EII-Glc accumulates in the cell and phosphorylates the PRD 1 domain of GlcT, leading to its inactivation; this phosphorylation may prevent dimerization of GlcT.</text>
</comment>
<comment type="similarity">
    <text evidence="7">Belongs to the transcriptional antiterminator BglG family. GlcT subfamily.</text>
</comment>
<comment type="sequence caution" evidence="7">
    <conflict type="erroneous initiation">
        <sequence resource="EMBL-CDS" id="CAB13261"/>
    </conflict>
</comment>
<dbReference type="EMBL" id="Y11193">
    <property type="protein sequence ID" value="CAA72077.1"/>
    <property type="molecule type" value="Genomic_DNA"/>
</dbReference>
<dbReference type="EMBL" id="AL009126">
    <property type="protein sequence ID" value="CAB13261.2"/>
    <property type="status" value="ALT_INIT"/>
    <property type="molecule type" value="Genomic_DNA"/>
</dbReference>
<dbReference type="PIR" id="D69632">
    <property type="entry name" value="D69632"/>
</dbReference>
<dbReference type="RefSeq" id="NP_389271.2">
    <property type="nucleotide sequence ID" value="NC_000964.3"/>
</dbReference>
<dbReference type="PDB" id="3GWH">
    <property type="method" value="X-ray"/>
    <property type="resolution" value="1.95 A"/>
    <property type="chains" value="A/B=171-273"/>
</dbReference>
<dbReference type="PDB" id="3RIO">
    <property type="method" value="X-ray"/>
    <property type="resolution" value="1.99 A"/>
    <property type="chains" value="A=2-170"/>
</dbReference>
<dbReference type="PDB" id="3UFE">
    <property type="method" value="X-ray"/>
    <property type="resolution" value="1.50 A"/>
    <property type="chains" value="A/B=171-273"/>
</dbReference>
<dbReference type="PDBsum" id="3GWH"/>
<dbReference type="PDBsum" id="3RIO"/>
<dbReference type="PDBsum" id="3UFE"/>
<dbReference type="BMRB" id="O31691"/>
<dbReference type="SMR" id="O31691"/>
<dbReference type="FunCoup" id="O31691">
    <property type="interactions" value="25"/>
</dbReference>
<dbReference type="STRING" id="224308.BSU13880"/>
<dbReference type="iPTMnet" id="O31691"/>
<dbReference type="PaxDb" id="224308-BSU13880"/>
<dbReference type="EnsemblBacteria" id="CAB13261">
    <property type="protein sequence ID" value="CAB13261"/>
    <property type="gene ID" value="BSU_13880"/>
</dbReference>
<dbReference type="GeneID" id="939254"/>
<dbReference type="KEGG" id="bsu:BSU13880"/>
<dbReference type="PATRIC" id="fig|224308.43.peg.1471"/>
<dbReference type="eggNOG" id="COG3711">
    <property type="taxonomic scope" value="Bacteria"/>
</dbReference>
<dbReference type="InParanoid" id="O31691"/>
<dbReference type="OrthoDB" id="9813552at2"/>
<dbReference type="BioCyc" id="BSUB:BSU13880-MONOMER"/>
<dbReference type="EvolutionaryTrace" id="O31691"/>
<dbReference type="Proteomes" id="UP000001570">
    <property type="component" value="Chromosome"/>
</dbReference>
<dbReference type="GO" id="GO:0003723">
    <property type="term" value="F:RNA binding"/>
    <property type="evidence" value="ECO:0007669"/>
    <property type="project" value="UniProtKB-KW"/>
</dbReference>
<dbReference type="GO" id="GO:0045893">
    <property type="term" value="P:positive regulation of DNA-templated transcription"/>
    <property type="evidence" value="ECO:0007669"/>
    <property type="project" value="InterPro"/>
</dbReference>
<dbReference type="Gene3D" id="1.20.58.1950">
    <property type="match status" value="1"/>
</dbReference>
<dbReference type="Gene3D" id="1.20.890.100">
    <property type="match status" value="1"/>
</dbReference>
<dbReference type="Gene3D" id="2.30.24.10">
    <property type="entry name" value="CAT RNA-binding domain"/>
    <property type="match status" value="1"/>
</dbReference>
<dbReference type="Gene3D" id="1.10.1790.10">
    <property type="entry name" value="PRD domain"/>
    <property type="match status" value="1"/>
</dbReference>
<dbReference type="InterPro" id="IPR050661">
    <property type="entry name" value="BglG_antiterminators"/>
</dbReference>
<dbReference type="InterPro" id="IPR004341">
    <property type="entry name" value="CAT_RNA-bd_dom"/>
</dbReference>
<dbReference type="InterPro" id="IPR036650">
    <property type="entry name" value="CAT_RNA-bd_dom_sf"/>
</dbReference>
<dbReference type="InterPro" id="IPR011608">
    <property type="entry name" value="PRD"/>
</dbReference>
<dbReference type="InterPro" id="IPR036634">
    <property type="entry name" value="PRD_sf"/>
</dbReference>
<dbReference type="InterPro" id="IPR001550">
    <property type="entry name" value="Transcrpt_antitermin_CS"/>
</dbReference>
<dbReference type="NCBIfam" id="NF047357">
    <property type="entry name" value="antiterm_GlcT"/>
    <property type="match status" value="1"/>
</dbReference>
<dbReference type="PANTHER" id="PTHR30185">
    <property type="entry name" value="CRYPTIC BETA-GLUCOSIDE BGL OPERON ANTITERMINATOR"/>
    <property type="match status" value="1"/>
</dbReference>
<dbReference type="PANTHER" id="PTHR30185:SF16">
    <property type="entry name" value="PROTEIN GLCT"/>
    <property type="match status" value="1"/>
</dbReference>
<dbReference type="Pfam" id="PF03123">
    <property type="entry name" value="CAT_RBD"/>
    <property type="match status" value="1"/>
</dbReference>
<dbReference type="Pfam" id="PF00874">
    <property type="entry name" value="PRD"/>
    <property type="match status" value="2"/>
</dbReference>
<dbReference type="SMART" id="SM01061">
    <property type="entry name" value="CAT_RBD"/>
    <property type="match status" value="1"/>
</dbReference>
<dbReference type="SUPFAM" id="SSF63520">
    <property type="entry name" value="PTS-regulatory domain, PRD"/>
    <property type="match status" value="2"/>
</dbReference>
<dbReference type="SUPFAM" id="SSF50151">
    <property type="entry name" value="SacY-like RNA-binding domain"/>
    <property type="match status" value="1"/>
</dbReference>
<dbReference type="PROSITE" id="PS00654">
    <property type="entry name" value="PRD_1"/>
    <property type="match status" value="1"/>
</dbReference>
<dbReference type="PROSITE" id="PS51372">
    <property type="entry name" value="PRD_2"/>
    <property type="match status" value="2"/>
</dbReference>
<protein>
    <recommendedName>
        <fullName>PtsGHI operon antiterminator</fullName>
    </recommendedName>
    <alternativeName>
        <fullName>RNA-binding antitermination protein GlcT</fullName>
    </alternativeName>
</protein>
<feature type="chain" id="PRO_0000388967" description="PtsGHI operon antiterminator">
    <location>
        <begin position="1"/>
        <end position="281"/>
    </location>
</feature>
<feature type="domain" description="PRD 1" evidence="2">
    <location>
        <begin position="69"/>
        <end position="174"/>
    </location>
</feature>
<feature type="domain" description="PRD 2" evidence="2">
    <location>
        <begin position="175"/>
        <end position="278"/>
    </location>
</feature>
<feature type="region of interest" description="RNA binding">
    <location>
        <begin position="1"/>
        <end position="60"/>
    </location>
</feature>
<feature type="modified residue" description="Phosphohistidine; by EII-Glc" evidence="2 6 8">
    <location>
        <position position="104"/>
    </location>
</feature>
<feature type="modified residue" description="Phosphohistidine; by EII-Glc" evidence="8">
    <location>
        <position position="163"/>
    </location>
</feature>
<feature type="modified residue" description="Phosphohistidine; by HPr" evidence="8">
    <location>
        <position position="211"/>
    </location>
</feature>
<feature type="mutagenesis site" description="Loss of antiterminator activity; when associated with P-19." evidence="3">
    <original>F</original>
    <variation>L</variation>
    <location>
        <position position="5"/>
    </location>
</feature>
<feature type="mutagenesis site" description="Loss of antiterminator activity; when associated with T-29." evidence="3">
    <original>F</original>
    <variation>S</variation>
    <location>
        <position position="5"/>
    </location>
</feature>
<feature type="mutagenesis site" description="Drastically reduced antiterminator activity; when associated with N-38." evidence="3">
    <original>K</original>
    <variation>R</variation>
    <location>
        <position position="9"/>
    </location>
</feature>
<feature type="mutagenesis site" description="Loss of antiterminator activity." evidence="3">
    <original>V</original>
    <variation>G</variation>
    <location>
        <position position="10"/>
    </location>
</feature>
<feature type="mutagenesis site" description="Drastically reduced antiterminator activity." evidence="3">
    <original>L</original>
    <variation>P</variation>
    <location>
        <position position="11"/>
    </location>
</feature>
<feature type="mutagenesis site" description="Loss of antiterminator activity." evidence="3">
    <original>N</original>
    <variation>D</variation>
    <location>
        <position position="12"/>
    </location>
</feature>
<feature type="mutagenesis site" description="Loss of antiterminator activity; when associated with L-5." evidence="3">
    <original>S</original>
    <variation>P</variation>
    <location>
        <position position="19"/>
    </location>
</feature>
<feature type="mutagenesis site" description="Drastically reduced antiterminator activity." evidence="3">
    <original>H</original>
    <variation>R</variation>
    <location>
        <position position="20"/>
    </location>
</feature>
<feature type="mutagenesis site" description="Loss of antiterminator activity; when associated with S-5." evidence="3">
    <original>I</original>
    <variation>T</variation>
    <location>
        <position position="29"/>
    </location>
</feature>
<feature type="mutagenesis site" description="Drastically reduced antiterminator activity; when associated with R-9." evidence="3">
    <original>K</original>
    <variation>N</variation>
    <location>
        <position position="38"/>
    </location>
</feature>
<feature type="mutagenesis site" description="Drastically reduced antiterminator activity." evidence="3">
    <original>M</original>
    <variation>T</variation>
    <location>
        <position position="51"/>
    </location>
</feature>
<feature type="mutagenesis site" description="Loss of antiterminator activity." evidence="3">
    <original>F</original>
    <variation>V</variation>
    <location>
        <position position="52"/>
    </location>
</feature>
<feature type="mutagenesis site" description="Affects negative regulation of the antiterminator activity; when associated with T-103." evidence="6">
    <original>T</original>
    <variation>S</variation>
    <location>
        <position position="102"/>
    </location>
</feature>
<feature type="mutagenesis site" description="Affects negative regulation of the antiterminator activity; when associated with S-102." evidence="6">
    <original>D</original>
    <variation>T</variation>
    <location>
        <position position="103"/>
    </location>
</feature>
<feature type="mutagenesis site" description="Affects negative regulation of the antiterminator activity. No effect on phosphorylation by HPr. Abolishes phosphorylation by both HPr and EII-Glc; when associated with D-211." evidence="5 6">
    <original>H</original>
    <variation>A</variation>
    <location>
        <position position="104"/>
    </location>
</feature>
<feature type="mutagenesis site" description="Affects negative regulation of the antitermination activity." evidence="5 6">
    <original>H</original>
    <variation>D</variation>
    <location>
        <position position="104"/>
    </location>
</feature>
<feature type="mutagenesis site" description="No effect on negative regulation of the antiterminator activity." evidence="6">
    <original>I</original>
    <variation>Q</variation>
    <location>
        <position position="109"/>
    </location>
</feature>
<feature type="mutagenesis site" description="Affects negative regulation of the antiterminator activity. No effect on phosphorylation by HPr. Abolishes phosphorylation by both HPr and EII-Glc; when associated with D-211." evidence="5">
    <original>H</original>
    <variation>D</variation>
    <location>
        <position position="163"/>
    </location>
</feature>
<feature type="mutagenesis site" description="Strongly reduced phosphorylation by HPr. Abolishes phosphorylation by both HPr and EII-Glc; when associated with A-104 or D-163." evidence="5">
    <original>H</original>
    <variation>D</variation>
    <location>
        <position position="211"/>
    </location>
</feature>
<feature type="mutagenesis site" description="Loss of ptsG expression." evidence="6">
    <original>T</original>
    <variation>P</variation>
    <location>
        <position position="245"/>
    </location>
</feature>
<feature type="strand" evidence="9">
    <location>
        <begin position="4"/>
        <end position="12"/>
    </location>
</feature>
<feature type="strand" evidence="9">
    <location>
        <begin position="15"/>
        <end position="19"/>
    </location>
</feature>
<feature type="helix" evidence="9">
    <location>
        <begin position="21"/>
        <end position="23"/>
    </location>
</feature>
<feature type="strand" evidence="9">
    <location>
        <begin position="25"/>
        <end position="29"/>
    </location>
</feature>
<feature type="turn" evidence="9">
    <location>
        <begin position="31"/>
        <end position="36"/>
    </location>
</feature>
<feature type="strand" evidence="9">
    <location>
        <begin position="42"/>
        <end position="44"/>
    </location>
</feature>
<feature type="strand" evidence="9">
    <location>
        <begin position="47"/>
        <end position="49"/>
    </location>
</feature>
<feature type="strand" evidence="9">
    <location>
        <begin position="52"/>
        <end position="54"/>
    </location>
</feature>
<feature type="helix" evidence="9">
    <location>
        <begin position="57"/>
        <end position="66"/>
    </location>
</feature>
<feature type="turn" evidence="9">
    <location>
        <begin position="67"/>
        <end position="69"/>
    </location>
</feature>
<feature type="helix" evidence="9">
    <location>
        <begin position="72"/>
        <end position="89"/>
    </location>
</feature>
<feature type="helix" evidence="9">
    <location>
        <begin position="97"/>
        <end position="113"/>
    </location>
</feature>
<feature type="helix" evidence="9">
    <location>
        <begin position="123"/>
        <end position="129"/>
    </location>
</feature>
<feature type="helix" evidence="9">
    <location>
        <begin position="131"/>
        <end position="148"/>
    </location>
</feature>
<feature type="helix" evidence="9">
    <location>
        <begin position="156"/>
        <end position="169"/>
    </location>
</feature>
<feature type="helix" evidence="10">
    <location>
        <begin position="173"/>
        <end position="175"/>
    </location>
</feature>
<feature type="helix" evidence="10">
    <location>
        <begin position="180"/>
        <end position="194"/>
    </location>
</feature>
<feature type="helix" evidence="10">
    <location>
        <begin position="203"/>
        <end position="221"/>
    </location>
</feature>
<feature type="helix" evidence="10">
    <location>
        <begin position="229"/>
        <end position="238"/>
    </location>
</feature>
<feature type="helix" evidence="10">
    <location>
        <begin position="240"/>
        <end position="257"/>
    </location>
</feature>
<feature type="helix" evidence="10">
    <location>
        <begin position="264"/>
        <end position="273"/>
    </location>
</feature>
<accession>O31691</accession>
<accession>O06710</accession>
<reference key="1">
    <citation type="journal article" date="1997" name="Mol. Microbiol.">
        <title>Induction of the Bacillus subtilis ptsGHI operon by glucose is controlled by a novel antiterminator, GlcT.</title>
        <authorList>
            <person name="Stuelke J."/>
            <person name="Martin-Verstraete I."/>
            <person name="Zagorec M."/>
            <person name="Rose M."/>
            <person name="Klier A."/>
            <person name="Rapoport G."/>
        </authorList>
    </citation>
    <scope>NUCLEOTIDE SEQUENCE [GENOMIC DNA]</scope>
    <scope>FUNCTION AS AN ANTITERMINATOR</scope>
    <scope>REGULATION BY EII-GLC</scope>
    <source>
        <strain>168</strain>
    </source>
</reference>
<reference key="2">
    <citation type="journal article" date="1997" name="Nature">
        <title>The complete genome sequence of the Gram-positive bacterium Bacillus subtilis.</title>
        <authorList>
            <person name="Kunst F."/>
            <person name="Ogasawara N."/>
            <person name="Moszer I."/>
            <person name="Albertini A.M."/>
            <person name="Alloni G."/>
            <person name="Azevedo V."/>
            <person name="Bertero M.G."/>
            <person name="Bessieres P."/>
            <person name="Bolotin A."/>
            <person name="Borchert S."/>
            <person name="Borriss R."/>
            <person name="Boursier L."/>
            <person name="Brans A."/>
            <person name="Braun M."/>
            <person name="Brignell S.C."/>
            <person name="Bron S."/>
            <person name="Brouillet S."/>
            <person name="Bruschi C.V."/>
            <person name="Caldwell B."/>
            <person name="Capuano V."/>
            <person name="Carter N.M."/>
            <person name="Choi S.-K."/>
            <person name="Codani J.-J."/>
            <person name="Connerton I.F."/>
            <person name="Cummings N.J."/>
            <person name="Daniel R.A."/>
            <person name="Denizot F."/>
            <person name="Devine K.M."/>
            <person name="Duesterhoeft A."/>
            <person name="Ehrlich S.D."/>
            <person name="Emmerson P.T."/>
            <person name="Entian K.-D."/>
            <person name="Errington J."/>
            <person name="Fabret C."/>
            <person name="Ferrari E."/>
            <person name="Foulger D."/>
            <person name="Fritz C."/>
            <person name="Fujita M."/>
            <person name="Fujita Y."/>
            <person name="Fuma S."/>
            <person name="Galizzi A."/>
            <person name="Galleron N."/>
            <person name="Ghim S.-Y."/>
            <person name="Glaser P."/>
            <person name="Goffeau A."/>
            <person name="Golightly E.J."/>
            <person name="Grandi G."/>
            <person name="Guiseppi G."/>
            <person name="Guy B.J."/>
            <person name="Haga K."/>
            <person name="Haiech J."/>
            <person name="Harwood C.R."/>
            <person name="Henaut A."/>
            <person name="Hilbert H."/>
            <person name="Holsappel S."/>
            <person name="Hosono S."/>
            <person name="Hullo M.-F."/>
            <person name="Itaya M."/>
            <person name="Jones L.-M."/>
            <person name="Joris B."/>
            <person name="Karamata D."/>
            <person name="Kasahara Y."/>
            <person name="Klaerr-Blanchard M."/>
            <person name="Klein C."/>
            <person name="Kobayashi Y."/>
            <person name="Koetter P."/>
            <person name="Koningstein G."/>
            <person name="Krogh S."/>
            <person name="Kumano M."/>
            <person name="Kurita K."/>
            <person name="Lapidus A."/>
            <person name="Lardinois S."/>
            <person name="Lauber J."/>
            <person name="Lazarevic V."/>
            <person name="Lee S.-M."/>
            <person name="Levine A."/>
            <person name="Liu H."/>
            <person name="Masuda S."/>
            <person name="Mauel C."/>
            <person name="Medigue C."/>
            <person name="Medina N."/>
            <person name="Mellado R.P."/>
            <person name="Mizuno M."/>
            <person name="Moestl D."/>
            <person name="Nakai S."/>
            <person name="Noback M."/>
            <person name="Noone D."/>
            <person name="O'Reilly M."/>
            <person name="Ogawa K."/>
            <person name="Ogiwara A."/>
            <person name="Oudega B."/>
            <person name="Park S.-H."/>
            <person name="Parro V."/>
            <person name="Pohl T.M."/>
            <person name="Portetelle D."/>
            <person name="Porwollik S."/>
            <person name="Prescott A.M."/>
            <person name="Presecan E."/>
            <person name="Pujic P."/>
            <person name="Purnelle B."/>
            <person name="Rapoport G."/>
            <person name="Rey M."/>
            <person name="Reynolds S."/>
            <person name="Rieger M."/>
            <person name="Rivolta C."/>
            <person name="Rocha E."/>
            <person name="Roche B."/>
            <person name="Rose M."/>
            <person name="Sadaie Y."/>
            <person name="Sato T."/>
            <person name="Scanlan E."/>
            <person name="Schleich S."/>
            <person name="Schroeter R."/>
            <person name="Scoffone F."/>
            <person name="Sekiguchi J."/>
            <person name="Sekowska A."/>
            <person name="Seror S.J."/>
            <person name="Serror P."/>
            <person name="Shin B.-S."/>
            <person name="Soldo B."/>
            <person name="Sorokin A."/>
            <person name="Tacconi E."/>
            <person name="Takagi T."/>
            <person name="Takahashi H."/>
            <person name="Takemaru K."/>
            <person name="Takeuchi M."/>
            <person name="Tamakoshi A."/>
            <person name="Tanaka T."/>
            <person name="Terpstra P."/>
            <person name="Tognoni A."/>
            <person name="Tosato V."/>
            <person name="Uchiyama S."/>
            <person name="Vandenbol M."/>
            <person name="Vannier F."/>
            <person name="Vassarotti A."/>
            <person name="Viari A."/>
            <person name="Wambutt R."/>
            <person name="Wedler E."/>
            <person name="Wedler H."/>
            <person name="Weitzenegger T."/>
            <person name="Winters P."/>
            <person name="Wipat A."/>
            <person name="Yamamoto H."/>
            <person name="Yamane K."/>
            <person name="Yasumoto K."/>
            <person name="Yata K."/>
            <person name="Yoshida K."/>
            <person name="Yoshikawa H.-F."/>
            <person name="Zumstein E."/>
            <person name="Yoshikawa H."/>
            <person name="Danchin A."/>
        </authorList>
    </citation>
    <scope>NUCLEOTIDE SEQUENCE [LARGE SCALE GENOMIC DNA]</scope>
    <source>
        <strain>168</strain>
    </source>
</reference>
<reference key="3">
    <citation type="journal article" date="2009" name="Microbiology">
        <title>From a consortium sequence to a unified sequence: the Bacillus subtilis 168 reference genome a decade later.</title>
        <authorList>
            <person name="Barbe V."/>
            <person name="Cruveiller S."/>
            <person name="Kunst F."/>
            <person name="Lenoble P."/>
            <person name="Meurice G."/>
            <person name="Sekowska A."/>
            <person name="Vallenet D."/>
            <person name="Wang T."/>
            <person name="Moszer I."/>
            <person name="Medigue C."/>
            <person name="Danchin A."/>
        </authorList>
    </citation>
    <scope>SEQUENCE REVISION TO C-TERMINUS</scope>
</reference>
<reference key="4">
    <citation type="journal article" date="1998" name="J. Bacteriol.">
        <title>Regulation of the Bacillus subtilis GlcT antiterminator protein by components of the phosphotransferase system.</title>
        <authorList>
            <person name="Bachem S."/>
            <person name="Stuelke J."/>
        </authorList>
    </citation>
    <scope>FUNCTION AS AN ANTITERMINATOR</scope>
    <scope>PHOSPHORYLATION AT HIS-104</scope>
    <scope>REGULATION BY HPR AND EII-GLC</scope>
    <scope>MUTAGENESIS OF THR-102; ASP-103; HIS-104; ILE-109 AND THR-245</scope>
</reference>
<reference key="5">
    <citation type="journal article" date="1999" name="J. Mol. Biol.">
        <title>Specific interaction of the RNA-binding domain of the Bacillus subtilis transcriptional antiterminator GlcT with its RNA target, RAT.</title>
        <authorList>
            <person name="Langbein I."/>
            <person name="Bachem S."/>
            <person name="Stuelke J."/>
        </authorList>
    </citation>
    <scope>INTERACTION WITH THE RNA ANTITERMINATOR (RAT) SEQUENCE</scope>
    <scope>MUTAGENESIS OF PHE-5; LYS-9; VAL-10; LEU-11; ASN-12; SER-19; HIS-20; ILE-29; LYS-38; MET-51 AND PHE-52</scope>
</reference>
<reference key="6">
    <citation type="journal article" date="2003" name="J. Biol. Chem.">
        <title>Control of the Bacillus subtilis antiterminator protein GlcT by phosphorylation. Elucidation of the phosphorylation chain leading to inactivation of GlcT.</title>
        <authorList>
            <person name="Schmalisch M.H."/>
            <person name="Bachem S."/>
            <person name="Stuelke J."/>
        </authorList>
    </citation>
    <scope>PHOSPHORYLATION AT HIS-104; HIS-163 AND HIS-211 BY HPR AND EII-GLC</scope>
    <scope>MUTAGENESIS OF HIS-104; HIS-163 AND HIS-211</scope>
</reference>
<reference key="7">
    <citation type="journal article" date="2004" name="Nucleic Acids Res.">
        <title>A protein-dependent riboswitch controlling ptsGHI operon expression in Bacillus subtilis: RNA structure rather than sequence provides interaction specificity.</title>
        <authorList>
            <person name="Schilling O."/>
            <person name="Langbein I."/>
            <person name="Mueller M."/>
            <person name="Schmalisch M.H."/>
            <person name="Stuelke J."/>
        </authorList>
    </citation>
    <scope>INTERACTION WITH THE RNA ANTITERMINATOR (RAT) SEQUENCE</scope>
</reference>
<reference key="8">
    <citation type="journal article" date="2006" name="Nucleic Acids Res.">
        <title>Keeping signals straight in transcription regulation: specificity determinants for the interaction of a family of conserved bacterial RNA-protein couples.</title>
        <authorList>
            <person name="Schilling O."/>
            <person name="Herzberg C."/>
            <person name="Hertrich T."/>
            <person name="Voersmann H."/>
            <person name="Jessen D."/>
            <person name="Huebner S."/>
            <person name="Titgemeyer F."/>
            <person name="Stuelke J."/>
        </authorList>
    </citation>
    <scope>INTERACTION WITH THE RNA ANTITERMINATOR (RAT) SEQUENCE</scope>
</reference>
<gene>
    <name type="primary">glcT</name>
    <name type="synonym">ykwA</name>
    <name type="ordered locus">BSU13880</name>
</gene>
<proteinExistence type="evidence at protein level"/>
<keyword id="KW-0002">3D-structure</keyword>
<keyword id="KW-0010">Activator</keyword>
<keyword id="KW-0597">Phosphoprotein</keyword>
<keyword id="KW-1185">Reference proteome</keyword>
<keyword id="KW-0677">Repeat</keyword>
<keyword id="KW-0694">RNA-binding</keyword>
<keyword id="KW-0804">Transcription</keyword>
<keyword id="KW-0805">Transcription regulation</keyword>
<organism>
    <name type="scientific">Bacillus subtilis (strain 168)</name>
    <dbReference type="NCBI Taxonomy" id="224308"/>
    <lineage>
        <taxon>Bacteria</taxon>
        <taxon>Bacillati</taxon>
        <taxon>Bacillota</taxon>
        <taxon>Bacilli</taxon>
        <taxon>Bacillales</taxon>
        <taxon>Bacillaceae</taxon>
        <taxon>Bacillus</taxon>
    </lineage>
</organism>